<name>PURR_ECOLI</name>
<proteinExistence type="evidence at protein level"/>
<gene>
    <name type="primary">purR</name>
    <name type="ordered locus">b1658</name>
    <name type="ordered locus">JW1650</name>
</gene>
<protein>
    <recommendedName>
        <fullName>HTH-type transcriptional repressor PurR</fullName>
    </recommendedName>
    <alternativeName>
        <fullName>Pur regulon repressor</fullName>
    </alternativeName>
    <alternativeName>
        <fullName>Purine nucleotide synthesis repressor</fullName>
    </alternativeName>
</protein>
<accession>P0ACP7</accession>
<accession>P15039</accession>
<accession>Q83RB1</accession>
<reference key="1">
    <citation type="journal article" date="1988" name="J. Biol. Chem.">
        <title>Escherichia coli gene purR encoding a repressor protein for purine nucleotide synthesis. Cloning, nucleotide sequence, and interaction with the purF operator.</title>
        <authorList>
            <person name="Rolfes R.J."/>
            <person name="Zalkin H."/>
        </authorList>
    </citation>
    <scope>NUCLEOTIDE SEQUENCE [GENOMIC DNA]</scope>
</reference>
<reference key="2">
    <citation type="journal article" date="1990" name="Eur. J. Biochem.">
        <title>Autoregulation of PurR repressor synthesis and involvement of purR in the regulation of purB, purC, purL, purMN and guaBA expression in Escherichia coli.</title>
        <authorList>
            <person name="Meng L.M."/>
            <person name="Kilstrup M."/>
            <person name="Nygaard P."/>
        </authorList>
    </citation>
    <scope>NUCLEOTIDE SEQUENCE [GENOMIC DNA]</scope>
    <scope>FUNCTION</scope>
    <scope>INDUCTION</scope>
    <source>
        <strain>K12</strain>
    </source>
</reference>
<reference key="3">
    <citation type="journal article" date="1996" name="DNA Res.">
        <title>A 570-kb DNA sequence of the Escherichia coli K-12 genome corresponding to the 28.0-40.1 min region on the linkage map.</title>
        <authorList>
            <person name="Aiba H."/>
            <person name="Baba T."/>
            <person name="Fujita K."/>
            <person name="Hayashi K."/>
            <person name="Inada T."/>
            <person name="Isono K."/>
            <person name="Itoh T."/>
            <person name="Kasai H."/>
            <person name="Kashimoto K."/>
            <person name="Kimura S."/>
            <person name="Kitakawa M."/>
            <person name="Kitagawa M."/>
            <person name="Makino K."/>
            <person name="Miki T."/>
            <person name="Mizobuchi K."/>
            <person name="Mori H."/>
            <person name="Mori T."/>
            <person name="Motomura K."/>
            <person name="Nakade S."/>
            <person name="Nakamura Y."/>
            <person name="Nashimoto H."/>
            <person name="Nishio Y."/>
            <person name="Oshima T."/>
            <person name="Saito N."/>
            <person name="Sampei G."/>
            <person name="Seki Y."/>
            <person name="Sivasundaram S."/>
            <person name="Tagami H."/>
            <person name="Takeda J."/>
            <person name="Takemoto K."/>
            <person name="Takeuchi Y."/>
            <person name="Wada C."/>
            <person name="Yamamoto Y."/>
            <person name="Horiuchi T."/>
        </authorList>
    </citation>
    <scope>NUCLEOTIDE SEQUENCE [LARGE SCALE GENOMIC DNA]</scope>
    <source>
        <strain>K12 / W3110 / ATCC 27325 / DSM 5911</strain>
    </source>
</reference>
<reference key="4">
    <citation type="journal article" date="1997" name="Science">
        <title>The complete genome sequence of Escherichia coli K-12.</title>
        <authorList>
            <person name="Blattner F.R."/>
            <person name="Plunkett G. III"/>
            <person name="Bloch C.A."/>
            <person name="Perna N.T."/>
            <person name="Burland V."/>
            <person name="Riley M."/>
            <person name="Collado-Vides J."/>
            <person name="Glasner J.D."/>
            <person name="Rode C.K."/>
            <person name="Mayhew G.F."/>
            <person name="Gregor J."/>
            <person name="Davis N.W."/>
            <person name="Kirkpatrick H.A."/>
            <person name="Goeden M.A."/>
            <person name="Rose D.J."/>
            <person name="Mau B."/>
            <person name="Shao Y."/>
        </authorList>
    </citation>
    <scope>NUCLEOTIDE SEQUENCE [LARGE SCALE GENOMIC DNA]</scope>
    <source>
        <strain>K12 / MG1655 / ATCC 47076</strain>
    </source>
</reference>
<reference key="5">
    <citation type="journal article" date="2006" name="Mol. Syst. Biol.">
        <title>Highly accurate genome sequences of Escherichia coli K-12 strains MG1655 and W3110.</title>
        <authorList>
            <person name="Hayashi K."/>
            <person name="Morooka N."/>
            <person name="Yamamoto Y."/>
            <person name="Fujita K."/>
            <person name="Isono K."/>
            <person name="Choi S."/>
            <person name="Ohtsubo E."/>
            <person name="Baba T."/>
            <person name="Wanner B.L."/>
            <person name="Mori H."/>
            <person name="Horiuchi T."/>
        </authorList>
    </citation>
    <scope>NUCLEOTIDE SEQUENCE [LARGE SCALE GENOMIC DNA]</scope>
    <source>
        <strain>K12 / W3110 / ATCC 27325 / DSM 5911</strain>
    </source>
</reference>
<reference key="6">
    <citation type="journal article" date="1990" name="J. Bacteriol.">
        <title>Purification of the Escherichia coli purine regulon repressor and identification of corepressors.</title>
        <authorList>
            <person name="Rolfes R.J."/>
            <person name="Zalkin H."/>
        </authorList>
    </citation>
    <scope>PROTEIN SEQUENCE OF 2-7</scope>
    <scope>FUNCTION</scope>
    <scope>IDENTIFICATION OF COREPRESSORS</scope>
</reference>
<reference key="7">
    <citation type="journal article" date="1992" name="J. Bacteriol.">
        <title>Structural characterization and corepressor binding of the Escherichia coli purine repressor.</title>
        <authorList>
            <person name="Choi K.Y."/>
            <person name="Zalkin H."/>
        </authorList>
    </citation>
    <scope>PARTIAL PROTEIN SEQUENCE</scope>
    <scope>FUNCTION</scope>
    <scope>CHARACTERIZATION</scope>
    <scope>SUBUNIT</scope>
</reference>
<reference key="8">
    <citation type="book" date="1996" name="Escherichia coli and Salmonella: Cellular and molecular biology (2nd ed.)">
        <title>Biosynthesis of purine nucleotides.</title>
        <editorList>
            <person name="Neidhardt F.C."/>
            <person name="Curtiss R. III"/>
            <person name="Ingraham J.L."/>
            <person name="Lin E.C.C."/>
            <person name="Low K.B. Magasanik B."/>
            <person name="Reznikoff W.S."/>
            <person name="Riley M."/>
            <person name="Schaechter M."/>
            <person name="Umbarger H.E."/>
        </editorList>
        <authorList>
            <person name="Zalkin H."/>
            <person name="Nygaard P."/>
        </authorList>
    </citation>
    <scope>REVIEW</scope>
</reference>
<reference key="9">
    <citation type="journal article" date="2004" name="J. Mol. Biol.">
        <title>Purine and pyrimidine-specific repression of the Escherichia coli carAB operon are functionally and structurally coupled.</title>
        <authorList>
            <person name="Devroede N."/>
            <person name="Thia-Toong T.-L."/>
            <person name="Gigot D."/>
            <person name="Maes D."/>
            <person name="Charlier D."/>
        </authorList>
    </citation>
    <scope>FUNCTION IN CARAB REPRESSION</scope>
</reference>
<reference key="10">
    <citation type="journal article" date="1994" name="Science">
        <title>Crystal structure of LacI member, PurR, bound to DNA: minor groove binding by alpha helices.</title>
        <authorList>
            <person name="Schumacher M.A."/>
            <person name="Choi K.Y."/>
            <person name="Zalkin H."/>
            <person name="Brennan R.G."/>
        </authorList>
    </citation>
    <scope>X-RAY CRYSTALLOGRAPHY (2.7 ANGSTROMS) IN COMPLEX WITH HYPOXANTHINE COREPRESSOR AND PURF OPERATOR DNA</scope>
</reference>
<reference key="11">
    <citation type="journal article" date="1995" name="Cell">
        <title>Mechanism of corepressor-mediated specific DNA binding by the purine repressor.</title>
        <authorList>
            <person name="Schumacher M.A."/>
            <person name="Choi K.Y."/>
            <person name="Lu F."/>
            <person name="Zalkin H."/>
            <person name="Brennan R.G."/>
        </authorList>
    </citation>
    <scope>X-RAY CRYSTALLOGRAPHY (2.2 ANGSTROMS) OF 53-341</scope>
</reference>
<reference key="12">
    <citation type="journal article" date="1995" name="Structure">
        <title>Structural comparison of the free and DNA-bound forms of the purine repressor DNA-binding domain.</title>
        <authorList>
            <person name="Nagadoi A."/>
            <person name="Morikawa S."/>
            <person name="Nakamura H."/>
            <person name="Enari M."/>
            <person name="Kobayashi K."/>
            <person name="Yamamoto H."/>
            <person name="Sampei G."/>
            <person name="Mizobuchi K."/>
            <person name="Schumacher M.A."/>
            <person name="Brennan R.G."/>
            <person name="Nishimura Y."/>
        </authorList>
    </citation>
    <scope>STRUCTURE BY NMR OF 1-56</scope>
</reference>
<reference key="13">
    <citation type="journal article" date="1997" name="J. Biol. Chem.">
        <title>The X-ray structure of the PurR-guanine-purF operator complex reveals the contributions of complementary electrostatic surfaces and a water-mediated hydrogen bond to corepressor specificity and binding affinity.</title>
        <authorList>
            <person name="Schumacher M.A."/>
            <person name="Glasfeld A."/>
            <person name="Zalkin H."/>
            <person name="Brennan R.G."/>
        </authorList>
    </citation>
    <scope>X-RAY CRYSTALLOGRAPHY (2.6 ANGSTROMS) IN COMPLEX WITH GUANINE COREPRESSOR AND PURF OPERATOR DNA</scope>
</reference>
<reference key="14">
    <citation type="journal article" date="1998" name="Biochemistry">
        <title>Structure-based redesign of corepressor specificity of the Escherichia coli purine repressor by substitution of residue 190.</title>
        <authorList>
            <person name="Lu F."/>
            <person name="Schumacher M.A."/>
            <person name="Arvidson D.N."/>
            <person name="Haldimann A."/>
            <person name="Wanner B.L."/>
            <person name="Zalkin H."/>
            <person name="Brennan R.G."/>
        </authorList>
    </citation>
    <scope>X-RAY CRYSTALLOGRAPHY (2.6 ANGSTROMS) OF MUTANTS GLN-190 AND ALA-190 IN COMPLEXES WITH VARIOUS PURINES AND OPERATOR DNA</scope>
    <scope>MUTAGENESIS OF ARG-190</scope>
</reference>
<reference evidence="22" key="15">
    <citation type="journal article" date="1998" name="Nat. Struct. Biol.">
        <title>The structure of PurR mutant L54M shows an alternative route to DNA kinking.</title>
        <authorList>
            <person name="Arvidson D.N."/>
            <person name="Lu F."/>
            <person name="Faber C."/>
            <person name="Zalkin H."/>
            <person name="Brennan R.G."/>
        </authorList>
    </citation>
    <scope>X-RAY CRYSTALLOGRAPHY (2.7 ANGSTROMS) OF MUTANT MET-54 IN COMPLEX WITH HYPOXANTHINE COREPRESSOR AND PURF OPERATOR DNA</scope>
</reference>
<reference evidence="16 17 18 19 20 21" key="16">
    <citation type="journal article" date="1999" name="J. Mol. Biol.">
        <title>The role of lysine 55 in determining the specificity of the purine repressor for its operators through minor groove interactions.</title>
        <authorList>
            <person name="Glasfeld A."/>
            <person name="Koehler A.N."/>
            <person name="Schumacher M.A."/>
            <person name="Brennan R.G."/>
        </authorList>
    </citation>
    <scope>X-RAY CRYSTALLOGRAPHY (2.5 ANGSTROMS) OF WILD-TYPE AND MUTANT ALA-55 IN COMPLEXES WITH VARIOUS PURF OPERATOR ANALOGS</scope>
    <scope>MUTAGENESIS OF LYS-55</scope>
</reference>
<reference evidence="23" key="17">
    <citation type="submission" date="1999-12" db="PDB data bank">
        <title>The roles of exocyclic groups in the central base-pair step in modulating the affinity of PurR for its operator.</title>
        <authorList>
            <person name="Zheleznova E.E."/>
            <person name="Brennan R.G."/>
        </authorList>
    </citation>
    <scope>X-RAY CRYSTALLOGRAPHY (2.7 ANGSTROMS) IN COMPLEX WITH HYPOXANTHINE COREPRESSOR AND PURF OPERATOR ANALOG</scope>
</reference>
<reference evidence="12 13 14 15" key="18">
    <citation type="journal article" date="2002" name="Biochemistry">
        <title>Role of residue 147 in the gene regulatory function of the Escherichia coli purine repressor.</title>
        <authorList>
            <person name="Huffman J.L."/>
            <person name="Lu F."/>
            <person name="Zalkin H."/>
            <person name="Brennan R.G."/>
        </authorList>
    </citation>
    <scope>X-RAY CRYSTALLOGRAPHY (2.4 ANGSTROMS) OF MUTANTS ARG-147; PHE-147 AND ALA-147 UNCOMPLEXED AND IN COMPLEX WITH HYPOXANTHINE COREPRESSOR AND PURF OPERATOR DNA</scope>
    <scope>MUTAGENESIS OF TRP-147</scope>
</reference>
<dbReference type="EMBL" id="J04212">
    <property type="protein sequence ID" value="AAA24457.1"/>
    <property type="molecule type" value="Genomic_DNA"/>
</dbReference>
<dbReference type="EMBL" id="X51368">
    <property type="protein sequence ID" value="CAA35753.1"/>
    <property type="molecule type" value="Genomic_DNA"/>
</dbReference>
<dbReference type="EMBL" id="U00096">
    <property type="protein sequence ID" value="AAC74730.1"/>
    <property type="molecule type" value="Genomic_DNA"/>
</dbReference>
<dbReference type="EMBL" id="AP009048">
    <property type="protein sequence ID" value="BAA15424.1"/>
    <property type="molecule type" value="Genomic_DNA"/>
</dbReference>
<dbReference type="PIR" id="A32027">
    <property type="entry name" value="RPECDU"/>
</dbReference>
<dbReference type="RefSeq" id="NP_416175.1">
    <property type="nucleotide sequence ID" value="NC_000913.3"/>
</dbReference>
<dbReference type="RefSeq" id="WP_000190982.1">
    <property type="nucleotide sequence ID" value="NZ_STEB01000003.1"/>
</dbReference>
<dbReference type="PDB" id="1BDH">
    <property type="method" value="X-ray"/>
    <property type="resolution" value="2.70 A"/>
    <property type="chains" value="A=2-341"/>
</dbReference>
<dbReference type="PDB" id="1BDI">
    <property type="method" value="X-ray"/>
    <property type="resolution" value="3.00 A"/>
    <property type="chains" value="A=2-341"/>
</dbReference>
<dbReference type="PDB" id="1DBQ">
    <property type="method" value="X-ray"/>
    <property type="resolution" value="2.20 A"/>
    <property type="chains" value="A/B=53-341"/>
</dbReference>
<dbReference type="PDB" id="1JFS">
    <property type="method" value="X-ray"/>
    <property type="resolution" value="2.90 A"/>
    <property type="chains" value="A=2-341"/>
</dbReference>
<dbReference type="PDB" id="1JFT">
    <property type="method" value="X-ray"/>
    <property type="resolution" value="2.50 A"/>
    <property type="chains" value="A=2-341"/>
</dbReference>
<dbReference type="PDB" id="1JH9">
    <property type="method" value="X-ray"/>
    <property type="resolution" value="2.55 A"/>
    <property type="chains" value="A=2-341"/>
</dbReference>
<dbReference type="PDB" id="1JHZ">
    <property type="method" value="X-ray"/>
    <property type="resolution" value="2.40 A"/>
    <property type="chains" value="A/B=53-341"/>
</dbReference>
<dbReference type="PDB" id="1PNR">
    <property type="method" value="X-ray"/>
    <property type="resolution" value="2.70 A"/>
    <property type="chains" value="A=2-341"/>
</dbReference>
<dbReference type="PDB" id="1PRU">
    <property type="method" value="NMR"/>
    <property type="chains" value="A=1-56"/>
</dbReference>
<dbReference type="PDB" id="1PRV">
    <property type="method" value="NMR"/>
    <property type="chains" value="A=1-56"/>
</dbReference>
<dbReference type="PDB" id="1QP0">
    <property type="method" value="X-ray"/>
    <property type="resolution" value="2.90 A"/>
    <property type="chains" value="A=2-341"/>
</dbReference>
<dbReference type="PDB" id="1QP4">
    <property type="method" value="X-ray"/>
    <property type="resolution" value="3.00 A"/>
    <property type="chains" value="A=2-341"/>
</dbReference>
<dbReference type="PDB" id="1QP7">
    <property type="method" value="X-ray"/>
    <property type="resolution" value="2.90 A"/>
    <property type="chains" value="A=2-341"/>
</dbReference>
<dbReference type="PDB" id="1QPZ">
    <property type="method" value="X-ray"/>
    <property type="resolution" value="2.50 A"/>
    <property type="chains" value="A=2-341"/>
</dbReference>
<dbReference type="PDB" id="1QQA">
    <property type="method" value="X-ray"/>
    <property type="resolution" value="3.00 A"/>
    <property type="chains" value="A=2-341"/>
</dbReference>
<dbReference type="PDB" id="1QQB">
    <property type="method" value="X-ray"/>
    <property type="resolution" value="2.70 A"/>
    <property type="chains" value="A=2-341"/>
</dbReference>
<dbReference type="PDB" id="1VPW">
    <property type="method" value="X-ray"/>
    <property type="resolution" value="2.70 A"/>
    <property type="chains" value="A=2-341"/>
</dbReference>
<dbReference type="PDB" id="1WET">
    <property type="method" value="X-ray"/>
    <property type="resolution" value="2.60 A"/>
    <property type="chains" value="A=2-341"/>
</dbReference>
<dbReference type="PDB" id="1ZAY">
    <property type="method" value="X-ray"/>
    <property type="resolution" value="2.70 A"/>
    <property type="chains" value="A=2-341"/>
</dbReference>
<dbReference type="PDB" id="2PUA">
    <property type="method" value="X-ray"/>
    <property type="resolution" value="2.90 A"/>
    <property type="chains" value="A=2-341"/>
</dbReference>
<dbReference type="PDB" id="2PUB">
    <property type="method" value="X-ray"/>
    <property type="resolution" value="2.70 A"/>
    <property type="chains" value="A=2-341"/>
</dbReference>
<dbReference type="PDB" id="2PUC">
    <property type="method" value="X-ray"/>
    <property type="resolution" value="2.60 A"/>
    <property type="chains" value="A=2-341"/>
</dbReference>
<dbReference type="PDB" id="2PUD">
    <property type="method" value="X-ray"/>
    <property type="resolution" value="2.60 A"/>
    <property type="chains" value="A=2-341"/>
</dbReference>
<dbReference type="PDB" id="2PUE">
    <property type="method" value="X-ray"/>
    <property type="resolution" value="2.70 A"/>
    <property type="chains" value="A=2-341"/>
</dbReference>
<dbReference type="PDB" id="2PUF">
    <property type="method" value="X-ray"/>
    <property type="resolution" value="3.00 A"/>
    <property type="chains" value="A=2-341"/>
</dbReference>
<dbReference type="PDB" id="2PUG">
    <property type="method" value="X-ray"/>
    <property type="resolution" value="2.70 A"/>
    <property type="chains" value="A=2-341"/>
</dbReference>
<dbReference type="PDBsum" id="1BDH"/>
<dbReference type="PDBsum" id="1BDI"/>
<dbReference type="PDBsum" id="1DBQ"/>
<dbReference type="PDBsum" id="1JFS"/>
<dbReference type="PDBsum" id="1JFT"/>
<dbReference type="PDBsum" id="1JH9"/>
<dbReference type="PDBsum" id="1JHZ"/>
<dbReference type="PDBsum" id="1PNR"/>
<dbReference type="PDBsum" id="1PRU"/>
<dbReference type="PDBsum" id="1PRV"/>
<dbReference type="PDBsum" id="1QP0"/>
<dbReference type="PDBsum" id="1QP4"/>
<dbReference type="PDBsum" id="1QP7"/>
<dbReference type="PDBsum" id="1QPZ"/>
<dbReference type="PDBsum" id="1QQA"/>
<dbReference type="PDBsum" id="1QQB"/>
<dbReference type="PDBsum" id="1VPW"/>
<dbReference type="PDBsum" id="1WET"/>
<dbReference type="PDBsum" id="1ZAY"/>
<dbReference type="PDBsum" id="2PUA"/>
<dbReference type="PDBsum" id="2PUB"/>
<dbReference type="PDBsum" id="2PUC"/>
<dbReference type="PDBsum" id="2PUD"/>
<dbReference type="PDBsum" id="2PUE"/>
<dbReference type="PDBsum" id="2PUF"/>
<dbReference type="PDBsum" id="2PUG"/>
<dbReference type="SMR" id="P0ACP7"/>
<dbReference type="BioGRID" id="4260271">
    <property type="interactions" value="98"/>
</dbReference>
<dbReference type="BioGRID" id="849611">
    <property type="interactions" value="1"/>
</dbReference>
<dbReference type="DIP" id="DIP-35931N"/>
<dbReference type="FunCoup" id="P0ACP7">
    <property type="interactions" value="304"/>
</dbReference>
<dbReference type="IntAct" id="P0ACP7">
    <property type="interactions" value="8"/>
</dbReference>
<dbReference type="STRING" id="511145.b1658"/>
<dbReference type="jPOST" id="P0ACP7"/>
<dbReference type="PaxDb" id="511145-b1658"/>
<dbReference type="EnsemblBacteria" id="AAC74730">
    <property type="protein sequence ID" value="AAC74730"/>
    <property type="gene ID" value="b1658"/>
</dbReference>
<dbReference type="GeneID" id="75204504"/>
<dbReference type="GeneID" id="945226"/>
<dbReference type="KEGG" id="ecj:JW1650"/>
<dbReference type="KEGG" id="eco:b1658"/>
<dbReference type="KEGG" id="ecoc:C3026_09515"/>
<dbReference type="PATRIC" id="fig|1411691.4.peg.599"/>
<dbReference type="EchoBASE" id="EB0793"/>
<dbReference type="eggNOG" id="COG1609">
    <property type="taxonomic scope" value="Bacteria"/>
</dbReference>
<dbReference type="HOGENOM" id="CLU_037628_6_2_6"/>
<dbReference type="InParanoid" id="P0ACP7"/>
<dbReference type="OMA" id="ARWVGPP"/>
<dbReference type="OrthoDB" id="9798934at2"/>
<dbReference type="PhylomeDB" id="P0ACP7"/>
<dbReference type="BioCyc" id="EcoCyc:PD00219"/>
<dbReference type="BioCyc" id="MetaCyc:PD00219"/>
<dbReference type="UniPathway" id="UPA00488"/>
<dbReference type="EvolutionaryTrace" id="P0ACP7"/>
<dbReference type="PRO" id="PR:P0ACP7"/>
<dbReference type="Proteomes" id="UP000000625">
    <property type="component" value="Chromosome"/>
</dbReference>
<dbReference type="GO" id="GO:0005829">
    <property type="term" value="C:cytosol"/>
    <property type="evidence" value="ECO:0000314"/>
    <property type="project" value="EcoCyc"/>
</dbReference>
<dbReference type="GO" id="GO:0003700">
    <property type="term" value="F:DNA-binding transcription factor activity"/>
    <property type="evidence" value="ECO:0000318"/>
    <property type="project" value="GO_Central"/>
</dbReference>
<dbReference type="GO" id="GO:0001217">
    <property type="term" value="F:DNA-binding transcription repressor activity"/>
    <property type="evidence" value="ECO:0000314"/>
    <property type="project" value="EcoCyc"/>
</dbReference>
<dbReference type="GO" id="GO:0002057">
    <property type="term" value="F:guanine binding"/>
    <property type="evidence" value="ECO:0000314"/>
    <property type="project" value="EcoCyc"/>
</dbReference>
<dbReference type="GO" id="GO:0042803">
    <property type="term" value="F:protein homodimerization activity"/>
    <property type="evidence" value="ECO:0000314"/>
    <property type="project" value="EcoCyc"/>
</dbReference>
<dbReference type="GO" id="GO:0000976">
    <property type="term" value="F:transcription cis-regulatory region binding"/>
    <property type="evidence" value="ECO:0000318"/>
    <property type="project" value="GO_Central"/>
</dbReference>
<dbReference type="GO" id="GO:0045892">
    <property type="term" value="P:negative regulation of DNA-templated transcription"/>
    <property type="evidence" value="ECO:0000315"/>
    <property type="project" value="EcoCyc"/>
</dbReference>
<dbReference type="GO" id="GO:1900372">
    <property type="term" value="P:negative regulation of purine nucleotide biosynthetic process"/>
    <property type="evidence" value="ECO:0000315"/>
    <property type="project" value="EcoCyc"/>
</dbReference>
<dbReference type="GO" id="GO:0006164">
    <property type="term" value="P:purine nucleotide biosynthetic process"/>
    <property type="evidence" value="ECO:0007669"/>
    <property type="project" value="UniProtKB-UniPathway"/>
</dbReference>
<dbReference type="GO" id="GO:0006355">
    <property type="term" value="P:regulation of DNA-templated transcription"/>
    <property type="evidence" value="ECO:0000318"/>
    <property type="project" value="GO_Central"/>
</dbReference>
<dbReference type="CDD" id="cd01392">
    <property type="entry name" value="HTH_LacI"/>
    <property type="match status" value="1"/>
</dbReference>
<dbReference type="CDD" id="cd06275">
    <property type="entry name" value="PBP1_PurR"/>
    <property type="match status" value="1"/>
</dbReference>
<dbReference type="FunFam" id="1.10.260.40:FF:000002">
    <property type="entry name" value="HTH-type transcriptional repressor PurR"/>
    <property type="match status" value="1"/>
</dbReference>
<dbReference type="FunFam" id="3.40.50.2300:FF:000045">
    <property type="entry name" value="HTH-type transcriptional repressor PurR"/>
    <property type="match status" value="1"/>
</dbReference>
<dbReference type="Gene3D" id="3.40.50.2300">
    <property type="match status" value="2"/>
</dbReference>
<dbReference type="Gene3D" id="1.10.260.40">
    <property type="entry name" value="lambda repressor-like DNA-binding domains"/>
    <property type="match status" value="1"/>
</dbReference>
<dbReference type="HAMAP" id="MF_01277">
    <property type="entry name" value="HTH_type_PurR"/>
    <property type="match status" value="1"/>
</dbReference>
<dbReference type="InterPro" id="IPR000843">
    <property type="entry name" value="HTH_LacI"/>
</dbReference>
<dbReference type="InterPro" id="IPR046335">
    <property type="entry name" value="LacI/GalR-like_sensor"/>
</dbReference>
<dbReference type="InterPro" id="IPR010982">
    <property type="entry name" value="Lambda_DNA-bd_dom_sf"/>
</dbReference>
<dbReference type="InterPro" id="IPR028082">
    <property type="entry name" value="Peripla_BP_I"/>
</dbReference>
<dbReference type="InterPro" id="IPR023588">
    <property type="entry name" value="Tscrpt_reg_HTH_PurR"/>
</dbReference>
<dbReference type="NCBIfam" id="NF007979">
    <property type="entry name" value="PRK10703.1"/>
    <property type="match status" value="1"/>
</dbReference>
<dbReference type="PANTHER" id="PTHR30146:SF148">
    <property type="entry name" value="HTH-TYPE TRANSCRIPTIONAL REPRESSOR PURR-RELATED"/>
    <property type="match status" value="1"/>
</dbReference>
<dbReference type="PANTHER" id="PTHR30146">
    <property type="entry name" value="LACI-RELATED TRANSCRIPTIONAL REPRESSOR"/>
    <property type="match status" value="1"/>
</dbReference>
<dbReference type="Pfam" id="PF00356">
    <property type="entry name" value="LacI"/>
    <property type="match status" value="1"/>
</dbReference>
<dbReference type="Pfam" id="PF13377">
    <property type="entry name" value="Peripla_BP_3"/>
    <property type="match status" value="1"/>
</dbReference>
<dbReference type="PRINTS" id="PR00036">
    <property type="entry name" value="HTHLACI"/>
</dbReference>
<dbReference type="SMART" id="SM00354">
    <property type="entry name" value="HTH_LACI"/>
    <property type="match status" value="1"/>
</dbReference>
<dbReference type="SUPFAM" id="SSF47413">
    <property type="entry name" value="lambda repressor-like DNA-binding domains"/>
    <property type="match status" value="1"/>
</dbReference>
<dbReference type="SUPFAM" id="SSF53822">
    <property type="entry name" value="Periplasmic binding protein-like I"/>
    <property type="match status" value="1"/>
</dbReference>
<dbReference type="PROSITE" id="PS00356">
    <property type="entry name" value="HTH_LACI_1"/>
    <property type="match status" value="1"/>
</dbReference>
<dbReference type="PROSITE" id="PS50932">
    <property type="entry name" value="HTH_LACI_2"/>
    <property type="match status" value="1"/>
</dbReference>
<evidence type="ECO:0000269" key="1">
    <source>
    </source>
</evidence>
<evidence type="ECO:0000269" key="2">
    <source>
    </source>
</evidence>
<evidence type="ECO:0000269" key="3">
    <source>
    </source>
</evidence>
<evidence type="ECO:0000269" key="4">
    <source>
    </source>
</evidence>
<evidence type="ECO:0000269" key="5">
    <source>
    </source>
</evidence>
<evidence type="ECO:0000269" key="6">
    <source>
    </source>
</evidence>
<evidence type="ECO:0000269" key="7">
    <source>
    </source>
</evidence>
<evidence type="ECO:0000269" key="8">
    <source>
    </source>
</evidence>
<evidence type="ECO:0000269" key="9">
    <source>
    </source>
</evidence>
<evidence type="ECO:0000269" key="10">
    <source>
    </source>
</evidence>
<evidence type="ECO:0000269" key="11">
    <source ref="17"/>
</evidence>
<evidence type="ECO:0007744" key="12">
    <source>
        <dbReference type="PDB" id="1JFS"/>
    </source>
</evidence>
<evidence type="ECO:0007744" key="13">
    <source>
        <dbReference type="PDB" id="1JFT"/>
    </source>
</evidence>
<evidence type="ECO:0007744" key="14">
    <source>
        <dbReference type="PDB" id="1JH9"/>
    </source>
</evidence>
<evidence type="ECO:0007744" key="15">
    <source>
        <dbReference type="PDB" id="1JHZ"/>
    </source>
</evidence>
<evidence type="ECO:0007744" key="16">
    <source>
        <dbReference type="PDB" id="1QP0"/>
    </source>
</evidence>
<evidence type="ECO:0007744" key="17">
    <source>
        <dbReference type="PDB" id="1QP4"/>
    </source>
</evidence>
<evidence type="ECO:0007744" key="18">
    <source>
        <dbReference type="PDB" id="1QP7"/>
    </source>
</evidence>
<evidence type="ECO:0007744" key="19">
    <source>
        <dbReference type="PDB" id="1QPZ"/>
    </source>
</evidence>
<evidence type="ECO:0007744" key="20">
    <source>
        <dbReference type="PDB" id="1QQA"/>
    </source>
</evidence>
<evidence type="ECO:0007744" key="21">
    <source>
        <dbReference type="PDB" id="1QQB"/>
    </source>
</evidence>
<evidence type="ECO:0007744" key="22">
    <source>
        <dbReference type="PDB" id="1VPW"/>
    </source>
</evidence>
<evidence type="ECO:0007744" key="23">
    <source>
        <dbReference type="PDB" id="1ZAY"/>
    </source>
</evidence>
<evidence type="ECO:0007829" key="24">
    <source>
        <dbReference type="PDB" id="1DBQ"/>
    </source>
</evidence>
<evidence type="ECO:0007829" key="25">
    <source>
        <dbReference type="PDB" id="1JFT"/>
    </source>
</evidence>
<evidence type="ECO:0007829" key="26">
    <source>
        <dbReference type="PDB" id="1JH9"/>
    </source>
</evidence>
<evidence type="ECO:0007829" key="27">
    <source>
        <dbReference type="PDB" id="1PRU"/>
    </source>
</evidence>
<evidence type="ECO:0007829" key="28">
    <source>
        <dbReference type="PDB" id="1QPZ"/>
    </source>
</evidence>
<organism>
    <name type="scientific">Escherichia coli (strain K12)</name>
    <dbReference type="NCBI Taxonomy" id="83333"/>
    <lineage>
        <taxon>Bacteria</taxon>
        <taxon>Pseudomonadati</taxon>
        <taxon>Pseudomonadota</taxon>
        <taxon>Gammaproteobacteria</taxon>
        <taxon>Enterobacterales</taxon>
        <taxon>Enterobacteriaceae</taxon>
        <taxon>Escherichia</taxon>
    </lineage>
</organism>
<comment type="function">
    <text evidence="3 4 5 6">Is the main repressor of the genes involved in the de novo synthesis of purine nucleotides, regulating purB, purC, purEK, purF, purHD, purL, purMN and guaBA expression. In addition, it participates in the regulation or coregulation of genes involved in de novo pyrimidine nucleotide biosynthesis, salvage and uptake (pyrC, pyrD, carAB and codBA), and of several genes encoding enzymes necessary for nucleotide and polyamine biosynthesis (prsA, glyA, gcvTHP, speA, glnB). Binds to a 16-bp palindromic sequence located within the promoter region of pur regulon genes. The consensus binding sequence is 5'-ACGCAAACGTTTTCNT-3'. PurR is allosterically activated to bind its cognate DNA by binding the purine corepressors, hypoxanthine or guanine, thereby effecting transcription repression.</text>
</comment>
<comment type="pathway">
    <text>Purine metabolism; purine nucleotide biosynthesis [regulation].</text>
</comment>
<comment type="subunit">
    <text evidence="2 3 7 8 10 11">Homodimer.</text>
</comment>
<comment type="interaction">
    <interactant intactId="EBI-1115258">
        <id>P0ACP7</id>
    </interactant>
    <interactant intactId="EBI-9126792">
        <id>P64503</id>
        <label>yebV</label>
    </interactant>
    <organismsDiffer>false</organismsDiffer>
    <experiments>4</experiments>
</comment>
<comment type="induction">
    <text evidence="6">Negatively autoregulated.</text>
</comment>
<comment type="domain">
    <text>Consists of two structural and functional domains: an N-terminal DNA-binding domain, approximately the first 60 residues, and a larger C-terminal domain, approximately 280 residues, which imparts the function of corepressor binding and oligomerization.</text>
</comment>
<comment type="miscellaneous">
    <text>The corepressors hypoxanthine and guanine bind cooperatively to single PurR sites in each subunit of the dimer, inducing a conformational change which increases the affinity of PurR for its DNA operator sites.</text>
</comment>
<sequence>MATIKDVAKRANVSTTTVSHVINKTRFVAEETRNAVWAAIKELHYSPSAVARSLKVNHTKSIGLLATSSEAAYFAEIIEAVEKNCFQKGYTLILGNAWNNLEKQRAYLSMMAQKRVDGLLVMCSEYPEPLLAMLEEYRHIPMVVMDWGEAKADFTDAVIDNAFEGGYMAGRYLIERGHREIGVIPGPLERNTGAGRLAGFMKAMEEAMIKVPESWIVQGDFEPESGYRAMQQILSQPHRPTAVFCGGDIMAMGALCAADEMGLRVPQDVSLIGYDNVRNARYFTPALTTIHQPKDSLGETAFNMLLDRIVNKREEPQSIEVHPRLIERRSVADGPFRDYRR</sequence>
<keyword id="KW-0002">3D-structure</keyword>
<keyword id="KW-0903">Direct protein sequencing</keyword>
<keyword id="KW-0238">DNA-binding</keyword>
<keyword id="KW-0658">Purine biosynthesis</keyword>
<keyword id="KW-1185">Reference proteome</keyword>
<keyword id="KW-0678">Repressor</keyword>
<keyword id="KW-0804">Transcription</keyword>
<keyword id="KW-0805">Transcription regulation</keyword>
<feature type="initiator methionine" description="Removed" evidence="5">
    <location>
        <position position="1"/>
    </location>
</feature>
<feature type="chain" id="PRO_0000107976" description="HTH-type transcriptional repressor PurR">
    <location>
        <begin position="2"/>
        <end position="341"/>
    </location>
</feature>
<feature type="domain" description="HTH lacI-type">
    <location>
        <begin position="2"/>
        <end position="56"/>
    </location>
</feature>
<feature type="DNA-binding region" description="H-T-H motif">
    <location>
        <begin position="4"/>
        <end position="23"/>
    </location>
</feature>
<feature type="DNA-binding region">
    <location>
        <begin position="48"/>
        <end position="56"/>
    </location>
</feature>
<feature type="binding site" evidence="2 10 11 12 22 23">
    <location>
        <position position="73"/>
    </location>
    <ligand>
        <name>hypoxanthine</name>
        <dbReference type="ChEBI" id="CHEBI:17368"/>
    </ligand>
</feature>
<feature type="binding site" evidence="2 10 11 12 22 23">
    <location>
        <position position="190"/>
    </location>
    <ligand>
        <name>hypoxanthine</name>
        <dbReference type="ChEBI" id="CHEBI:17368"/>
    </ligand>
</feature>
<feature type="binding site" evidence="2 10 11 12 22 23">
    <location>
        <position position="192"/>
    </location>
    <ligand>
        <name>hypoxanthine</name>
        <dbReference type="ChEBI" id="CHEBI:17368"/>
    </ligand>
</feature>
<feature type="binding site" evidence="2 10 11 12 22 23">
    <location>
        <position position="221"/>
    </location>
    <ligand>
        <name>hypoxanthine</name>
        <dbReference type="ChEBI" id="CHEBI:17368"/>
    </ligand>
</feature>
<feature type="binding site" evidence="2 10 11 12 22 23">
    <location>
        <position position="275"/>
    </location>
    <ligand>
        <name>hypoxanthine</name>
        <dbReference type="ChEBI" id="CHEBI:17368"/>
    </ligand>
</feature>
<feature type="site" description="Is the key determinant of 6-oxopurine corepressor specificity">
    <location>
        <position position="190"/>
    </location>
</feature>
<feature type="mutagenesis site" description="Slight decrease in operator DNA affinity.">
    <original>L</original>
    <variation>M</variation>
    <location>
        <position position="54"/>
    </location>
</feature>
<feature type="mutagenesis site" description="Decrease in operator DNA affinity." evidence="1">
    <original>K</original>
    <variation>A</variation>
    <location>
        <position position="55"/>
    </location>
</feature>
<feature type="mutagenesis site" description="14-fold increase in corepressor affinity. Large increase in repressor activity." evidence="2">
    <original>W</original>
    <variation>A</variation>
    <location>
        <position position="147"/>
    </location>
</feature>
<feature type="mutagenesis site" description="Large decrease in corepressor affinity and in repressor activity." evidence="2">
    <original>W</original>
    <variation>F</variation>
    <location>
        <position position="147"/>
    </location>
</feature>
<feature type="mutagenesis site" description="8-fold increase in corepressor affinity. Large increase in repressor activity." evidence="2">
    <original>W</original>
    <variation>R</variation>
    <location>
        <position position="147"/>
    </location>
</feature>
<feature type="mutagenesis site" description="Functional repressor. Corepressor specificity is expanded since it allows binding of adenine and 6-methylpurine." evidence="9">
    <original>R</original>
    <variation>A</variation>
    <location>
        <position position="190"/>
    </location>
</feature>
<feature type="mutagenesis site" description="Functional repressor. Corepressor specificity is expanded since it allows binding of adenine." evidence="9">
    <original>R</original>
    <variation>Q</variation>
    <location>
        <position position="190"/>
    </location>
</feature>
<feature type="helix" evidence="25">
    <location>
        <begin position="4"/>
        <end position="11"/>
    </location>
</feature>
<feature type="strand" evidence="27">
    <location>
        <begin position="12"/>
        <end position="14"/>
    </location>
</feature>
<feature type="helix" evidence="25">
    <location>
        <begin position="15"/>
        <end position="22"/>
    </location>
</feature>
<feature type="helix" evidence="25">
    <location>
        <begin position="30"/>
        <end position="42"/>
    </location>
</feature>
<feature type="helix" evidence="25">
    <location>
        <begin position="49"/>
        <end position="56"/>
    </location>
</feature>
<feature type="strand" evidence="24">
    <location>
        <begin position="61"/>
        <end position="67"/>
    </location>
</feature>
<feature type="strand" evidence="26">
    <location>
        <begin position="69"/>
        <end position="71"/>
    </location>
</feature>
<feature type="helix" evidence="24">
    <location>
        <begin position="72"/>
        <end position="88"/>
    </location>
</feature>
<feature type="strand" evidence="24">
    <location>
        <begin position="91"/>
        <end position="96"/>
    </location>
</feature>
<feature type="helix" evidence="24">
    <location>
        <begin position="101"/>
        <end position="113"/>
    </location>
</feature>
<feature type="strand" evidence="24">
    <location>
        <begin position="117"/>
        <end position="122"/>
    </location>
</feature>
<feature type="helix" evidence="24">
    <location>
        <begin position="128"/>
        <end position="136"/>
    </location>
</feature>
<feature type="turn" evidence="24">
    <location>
        <begin position="137"/>
        <end position="139"/>
    </location>
</feature>
<feature type="strand" evidence="24">
    <location>
        <begin position="142"/>
        <end position="146"/>
    </location>
</feature>
<feature type="strand" evidence="24">
    <location>
        <begin position="152"/>
        <end position="154"/>
    </location>
</feature>
<feature type="strand" evidence="24">
    <location>
        <begin position="156"/>
        <end position="160"/>
    </location>
</feature>
<feature type="helix" evidence="24">
    <location>
        <begin position="162"/>
        <end position="175"/>
    </location>
</feature>
<feature type="strand" evidence="24">
    <location>
        <begin position="180"/>
        <end position="184"/>
    </location>
</feature>
<feature type="helix" evidence="24">
    <location>
        <begin position="195"/>
        <end position="206"/>
    </location>
</feature>
<feature type="helix" evidence="24">
    <location>
        <begin position="213"/>
        <end position="215"/>
    </location>
</feature>
<feature type="helix" evidence="24">
    <location>
        <begin position="223"/>
        <end position="234"/>
    </location>
</feature>
<feature type="strand" evidence="24">
    <location>
        <begin position="236"/>
        <end position="238"/>
    </location>
</feature>
<feature type="strand" evidence="24">
    <location>
        <begin position="241"/>
        <end position="246"/>
    </location>
</feature>
<feature type="helix" evidence="24">
    <location>
        <begin position="248"/>
        <end position="260"/>
    </location>
</feature>
<feature type="turn" evidence="24">
    <location>
        <begin position="265"/>
        <end position="268"/>
    </location>
</feature>
<feature type="strand" evidence="24">
    <location>
        <begin position="270"/>
        <end position="275"/>
    </location>
</feature>
<feature type="helix" evidence="24">
    <location>
        <begin position="280"/>
        <end position="282"/>
    </location>
</feature>
<feature type="strand" evidence="24">
    <location>
        <begin position="283"/>
        <end position="285"/>
    </location>
</feature>
<feature type="strand" evidence="24">
    <location>
        <begin position="288"/>
        <end position="291"/>
    </location>
</feature>
<feature type="helix" evidence="24">
    <location>
        <begin position="295"/>
        <end position="310"/>
    </location>
</feature>
<feature type="strand" evidence="24">
    <location>
        <begin position="318"/>
        <end position="321"/>
    </location>
</feature>
<feature type="strand" evidence="24">
    <location>
        <begin position="324"/>
        <end position="326"/>
    </location>
</feature>
<feature type="helix" evidence="28">
    <location>
        <begin position="337"/>
        <end position="339"/>
    </location>
</feature>